<comment type="function">
    <text evidence="2">Ribosomally synthesized cyclic peptide phomopsin precursor; part of the gene cluster that mediates the biosynthesis of the epichloecyclins, a group of nonapeptides, with a likely cyclic structure and dimethylation of the conserved lysine (PubMed:26519220). The gigA translated product contains 4 repeated peptide embedding the nonapeptide Ile-Asn-Phe-Lys-Ile-Pro-Tyr-Thr-Gly in repeats 1 and 2, Ile-Gly-Phe-Lys-Leu-Pro-Tyr-Arg-Gly in repeat 3, and Pro-Asn-Phe-Lys-Met-Pro-Tyr-Arg-Gly in repeat 4 that are converted into epichloecyclins B, C and A, respectively (PubMed:26519220). Moreover, removal of the last Gly residue in epichloecyclins B and C leads to epichloecyclins D and E, respectively (PubMed:26519220).</text>
</comment>
<comment type="pathway">
    <text evidence="2">Mycotoxin biosynthesis.</text>
</comment>
<comment type="PTM">
    <text evidence="2 4">GigA is processed by several endopeptidases including kexin proteases to produce 2 identical copies of the nonaxapeptide Ile-Asn-Phe-Lys-Ile-Pro-Tyr-Thr-Gly, one copy of the nonaketide Ile-Gly-Phe-Lys-Leu-Pro-Tyr-Arg-Gly and one copy of the nonaketide Pro-Asn-Phe-Lys-Met-Pro-Tyr-Arg-Gly, that are further modified into phomapsins B, C and A, respectively (Probable). After being excised from the precursor peptide, the core peptides are cyclized and modified post-translationally by enzymes encoded within the gene cluster (PubMed:26519220). Epichloecyclin biosynthesis requires only dimethylation of the side-chain amino group of the conserved lysine for completion (PubMed:26519220).</text>
</comment>
<protein>
    <recommendedName>
        <fullName evidence="3">Ribosomally synthesized cyclic peptide phomopsin precursor gigA</fullName>
    </recommendedName>
    <component>
        <recommendedName>
            <fullName evidence="3">INFKIPYTG-I</fullName>
        </recommendedName>
    </component>
    <component>
        <recommendedName>
            <fullName evidence="3">INFKIPYTG-II</fullName>
        </recommendedName>
    </component>
    <component>
        <recommendedName>
            <fullName evidence="3">IGFKLPYRG</fullName>
        </recommendedName>
    </component>
    <component>
        <recommendedName>
            <fullName evidence="3">PNFKMPYKG</fullName>
        </recommendedName>
    </component>
</protein>
<organism>
    <name type="scientific">Epichloe festucae (strain Fl1)</name>
    <dbReference type="NCBI Taxonomy" id="877507"/>
    <lineage>
        <taxon>Eukaryota</taxon>
        <taxon>Fungi</taxon>
        <taxon>Dikarya</taxon>
        <taxon>Ascomycota</taxon>
        <taxon>Pezizomycotina</taxon>
        <taxon>Sordariomycetes</taxon>
        <taxon>Hypocreomycetidae</taxon>
        <taxon>Hypocreales</taxon>
        <taxon>Clavicipitaceae</taxon>
        <taxon>Epichloe</taxon>
    </lineage>
</organism>
<feature type="signal peptide" evidence="1">
    <location>
        <begin position="1"/>
        <end position="18"/>
    </location>
</feature>
<feature type="propeptide" id="PRO_0000458328" evidence="4">
    <location>
        <begin position="19"/>
        <end position="38"/>
    </location>
</feature>
<feature type="peptide" id="PRO_5010824236" description="INFKIPYTG-I" evidence="4">
    <location>
        <begin position="39"/>
        <end position="47"/>
    </location>
</feature>
<feature type="propeptide" id="PRO_0000458329" evidence="4">
    <location>
        <begin position="48"/>
        <end position="65"/>
    </location>
</feature>
<feature type="peptide" id="PRO_0000458330" description="INFKIPYTG-II" evidence="4">
    <location>
        <begin position="66"/>
        <end position="74"/>
    </location>
</feature>
<feature type="propeptide" id="PRO_0000458331" evidence="4">
    <location>
        <begin position="75"/>
        <end position="92"/>
    </location>
</feature>
<feature type="peptide" id="PRO_0000458332" description="IGFKLPYRG" evidence="4">
    <location>
        <begin position="93"/>
        <end position="101"/>
    </location>
</feature>
<feature type="propeptide" id="PRO_0000458333" evidence="4">
    <location>
        <begin position="102"/>
        <end position="119"/>
    </location>
</feature>
<feature type="peptide" id="PRO_0000458334" description="PNFKMPYKG" evidence="4">
    <location>
        <begin position="120"/>
        <end position="128"/>
    </location>
</feature>
<feature type="propeptide" id="PRO_0000458335" evidence="4">
    <location>
        <begin position="129"/>
        <end position="131"/>
    </location>
</feature>
<gene>
    <name type="primary">nc25</name>
    <name type="synonym">gigA</name>
</gene>
<reference key="1">
    <citation type="journal article" date="2009" name="BMC Evol. Biol.">
        <title>Evolution of a subtilisin-like protease gene family in the grass endophytic fungus Epichloe festucae.</title>
        <authorList>
            <person name="Bryant M.K."/>
            <person name="Schardl C.L."/>
            <person name="Hesse U."/>
            <person name="Scott B."/>
        </authorList>
    </citation>
    <scope>NUCLEOTIDE SEQUENCE [GENOMIC DNA]</scope>
    <source>
        <strain>Fl1</strain>
    </source>
</reference>
<reference key="2">
    <citation type="journal article" date="2015" name="Fungal Genet. Biol.">
        <title>A novel family of cyclic oligopeptides derived from ribosomal peptide synthesis of an in planta-induced gene, gigA, in Epichloe endophytes of grasses.</title>
        <authorList>
            <person name="Johnson R.D."/>
            <person name="Lane G.A."/>
            <person name="Koulman A."/>
            <person name="Cao M."/>
            <person name="Fraser K."/>
            <person name="Fleetwood D.J."/>
            <person name="Voisey C.R."/>
            <person name="Dyer J.M."/>
            <person name="Pratt J."/>
            <person name="Christensen M."/>
            <person name="Simpson W.R."/>
            <person name="Bryan G.T."/>
            <person name="Johnson L.J."/>
        </authorList>
    </citation>
    <scope>NUCLEOTIDE SEQUENCE [GENOMIC DNA]</scope>
    <scope>FUNCTION</scope>
    <scope>PATHWAY</scope>
    <source>
        <strain>Fl1</strain>
    </source>
</reference>
<name>GIGA_EPIFF</name>
<accession>B2CJ57</accession>
<keyword id="KW-0677">Repeat</keyword>
<keyword id="KW-0732">Signal</keyword>
<dbReference type="EMBL" id="EU515140">
    <property type="protein sequence ID" value="ACB30126.1"/>
    <property type="molecule type" value="Genomic_DNA"/>
</dbReference>
<dbReference type="EMBL" id="KP797979">
    <property type="protein sequence ID" value="AKU37969.1"/>
    <property type="molecule type" value="Genomic_DNA"/>
</dbReference>
<evidence type="ECO:0000255" key="1"/>
<evidence type="ECO:0000269" key="2">
    <source>
    </source>
</evidence>
<evidence type="ECO:0000303" key="3">
    <source>
    </source>
</evidence>
<evidence type="ECO:0000305" key="4">
    <source>
    </source>
</evidence>
<proteinExistence type="inferred from homology"/>
<sequence length="131" mass="14619">MQFTLIFFYATLAAFGLAAPSEQVGRDVVQEGDELDKRINFKIPYTGADLVDGDDVQEGDKLDKRINFKIPYTGADMVDGDDVQEGDKLDKRIGFKLPYRGADMVDGDDVQEGDELAKRPNFKMPYKGADM</sequence>